<comment type="function">
    <text evidence="1">The RuvA-RuvB-RuvC complex processes Holliday junction (HJ) DNA during genetic recombination and DNA repair, while the RuvA-RuvB complex plays an important role in the rescue of blocked DNA replication forks via replication fork reversal (RFR). RuvA specifically binds to HJ cruciform DNA, conferring on it an open structure. The RuvB hexamer acts as an ATP-dependent pump, pulling dsDNA into and through the RuvAB complex. HJ branch migration allows RuvC to scan DNA until it finds its consensus sequence, where it cleaves and resolves the cruciform DNA.</text>
</comment>
<comment type="subunit">
    <text evidence="1">Homotetramer. Forms an RuvA(8)-RuvB(12)-Holliday junction (HJ) complex. HJ DNA is sandwiched between 2 RuvA tetramers; dsDNA enters through RuvA and exits via RuvB. An RuvB hexamer assembles on each DNA strand where it exits the tetramer. Each RuvB hexamer is contacted by two RuvA subunits (via domain III) on 2 adjacent RuvB subunits; this complex drives branch migration. In the full resolvosome a probable DNA-RuvA(4)-RuvB(12)-RuvC(2) complex forms which resolves the HJ.</text>
</comment>
<comment type="subcellular location">
    <subcellularLocation>
        <location evidence="1">Cytoplasm</location>
    </subcellularLocation>
</comment>
<comment type="domain">
    <text evidence="1">Has three domains with a flexible linker between the domains II and III and assumes an 'L' shape. Domain III is highly mobile and contacts RuvB.</text>
</comment>
<comment type="similarity">
    <text evidence="1">Belongs to the RuvA family.</text>
</comment>
<sequence>MIGRLRGIILEKQPPIVLLETGGVGYEVHMPMTCFYELPEAGQEAIVFTHFVVREDAQLLYGFNNKQERTLFKELIKTNGVGPKLALAILSGMSAQQFVNAVEREELGALVKLPGIGKKTAERLIVEMKDRFKGLHGDLFTPAVDLVLTSPASPTSEDAEQEAVAALVALGYKPQEASRMVSKIARPDASSETLIRDALRAAL</sequence>
<protein>
    <recommendedName>
        <fullName evidence="1">Holliday junction branch migration complex subunit RuvA</fullName>
    </recommendedName>
</protein>
<dbReference type="EMBL" id="AL513382">
    <property type="protein sequence ID" value="CAD05646.1"/>
    <property type="molecule type" value="Genomic_DNA"/>
</dbReference>
<dbReference type="EMBL" id="AE014613">
    <property type="protein sequence ID" value="AAO68654.1"/>
    <property type="molecule type" value="Genomic_DNA"/>
</dbReference>
<dbReference type="RefSeq" id="NP_456462.1">
    <property type="nucleotide sequence ID" value="NC_003198.1"/>
</dbReference>
<dbReference type="RefSeq" id="WP_000580335.1">
    <property type="nucleotide sequence ID" value="NZ_WSUR01000004.1"/>
</dbReference>
<dbReference type="SMR" id="P66747"/>
<dbReference type="STRING" id="220341.gene:17586011"/>
<dbReference type="KEGG" id="stt:t0982"/>
<dbReference type="KEGG" id="sty:STY2103"/>
<dbReference type="PATRIC" id="fig|220341.7.peg.2113"/>
<dbReference type="eggNOG" id="COG0632">
    <property type="taxonomic scope" value="Bacteria"/>
</dbReference>
<dbReference type="HOGENOM" id="CLU_087936_0_0_6"/>
<dbReference type="OMA" id="ECAGVGY"/>
<dbReference type="OrthoDB" id="5293449at2"/>
<dbReference type="Proteomes" id="UP000000541">
    <property type="component" value="Chromosome"/>
</dbReference>
<dbReference type="Proteomes" id="UP000002670">
    <property type="component" value="Chromosome"/>
</dbReference>
<dbReference type="GO" id="GO:0005737">
    <property type="term" value="C:cytoplasm"/>
    <property type="evidence" value="ECO:0007669"/>
    <property type="project" value="UniProtKB-SubCell"/>
</dbReference>
<dbReference type="GO" id="GO:0009379">
    <property type="term" value="C:Holliday junction helicase complex"/>
    <property type="evidence" value="ECO:0007669"/>
    <property type="project" value="InterPro"/>
</dbReference>
<dbReference type="GO" id="GO:0048476">
    <property type="term" value="C:Holliday junction resolvase complex"/>
    <property type="evidence" value="ECO:0007669"/>
    <property type="project" value="UniProtKB-UniRule"/>
</dbReference>
<dbReference type="GO" id="GO:0005524">
    <property type="term" value="F:ATP binding"/>
    <property type="evidence" value="ECO:0007669"/>
    <property type="project" value="InterPro"/>
</dbReference>
<dbReference type="GO" id="GO:0000400">
    <property type="term" value="F:four-way junction DNA binding"/>
    <property type="evidence" value="ECO:0007669"/>
    <property type="project" value="UniProtKB-UniRule"/>
</dbReference>
<dbReference type="GO" id="GO:0009378">
    <property type="term" value="F:four-way junction helicase activity"/>
    <property type="evidence" value="ECO:0007669"/>
    <property type="project" value="InterPro"/>
</dbReference>
<dbReference type="GO" id="GO:0006310">
    <property type="term" value="P:DNA recombination"/>
    <property type="evidence" value="ECO:0007669"/>
    <property type="project" value="UniProtKB-UniRule"/>
</dbReference>
<dbReference type="GO" id="GO:0006281">
    <property type="term" value="P:DNA repair"/>
    <property type="evidence" value="ECO:0007669"/>
    <property type="project" value="UniProtKB-UniRule"/>
</dbReference>
<dbReference type="CDD" id="cd14332">
    <property type="entry name" value="UBA_RuvA_C"/>
    <property type="match status" value="1"/>
</dbReference>
<dbReference type="FunFam" id="1.10.150.20:FF:000012">
    <property type="entry name" value="Holliday junction ATP-dependent DNA helicase RuvA"/>
    <property type="match status" value="1"/>
</dbReference>
<dbReference type="FunFam" id="1.10.8.10:FF:000008">
    <property type="entry name" value="Holliday junction ATP-dependent DNA helicase RuvA"/>
    <property type="match status" value="1"/>
</dbReference>
<dbReference type="FunFam" id="2.40.50.140:FF:000083">
    <property type="entry name" value="Holliday junction ATP-dependent DNA helicase RuvA"/>
    <property type="match status" value="1"/>
</dbReference>
<dbReference type="Gene3D" id="1.10.150.20">
    <property type="entry name" value="5' to 3' exonuclease, C-terminal subdomain"/>
    <property type="match status" value="1"/>
</dbReference>
<dbReference type="Gene3D" id="1.10.8.10">
    <property type="entry name" value="DNA helicase RuvA subunit, C-terminal domain"/>
    <property type="match status" value="1"/>
</dbReference>
<dbReference type="Gene3D" id="2.40.50.140">
    <property type="entry name" value="Nucleic acid-binding proteins"/>
    <property type="match status" value="1"/>
</dbReference>
<dbReference type="HAMAP" id="MF_00031">
    <property type="entry name" value="DNA_HJ_migration_RuvA"/>
    <property type="match status" value="1"/>
</dbReference>
<dbReference type="InterPro" id="IPR013849">
    <property type="entry name" value="DNA_helicase_Holl-junc_RuvA_I"/>
</dbReference>
<dbReference type="InterPro" id="IPR003583">
    <property type="entry name" value="Hlx-hairpin-Hlx_DNA-bd_motif"/>
</dbReference>
<dbReference type="InterPro" id="IPR012340">
    <property type="entry name" value="NA-bd_OB-fold"/>
</dbReference>
<dbReference type="InterPro" id="IPR000085">
    <property type="entry name" value="RuvA"/>
</dbReference>
<dbReference type="InterPro" id="IPR010994">
    <property type="entry name" value="RuvA_2-like"/>
</dbReference>
<dbReference type="InterPro" id="IPR011114">
    <property type="entry name" value="RuvA_C"/>
</dbReference>
<dbReference type="InterPro" id="IPR036267">
    <property type="entry name" value="RuvA_C_sf"/>
</dbReference>
<dbReference type="NCBIfam" id="TIGR00084">
    <property type="entry name" value="ruvA"/>
    <property type="match status" value="1"/>
</dbReference>
<dbReference type="Pfam" id="PF14520">
    <property type="entry name" value="HHH_5"/>
    <property type="match status" value="1"/>
</dbReference>
<dbReference type="Pfam" id="PF07499">
    <property type="entry name" value="RuvA_C"/>
    <property type="match status" value="1"/>
</dbReference>
<dbReference type="Pfam" id="PF01330">
    <property type="entry name" value="RuvA_N"/>
    <property type="match status" value="1"/>
</dbReference>
<dbReference type="SMART" id="SM00278">
    <property type="entry name" value="HhH1"/>
    <property type="match status" value="2"/>
</dbReference>
<dbReference type="SUPFAM" id="SSF46929">
    <property type="entry name" value="DNA helicase RuvA subunit, C-terminal domain"/>
    <property type="match status" value="1"/>
</dbReference>
<dbReference type="SUPFAM" id="SSF50249">
    <property type="entry name" value="Nucleic acid-binding proteins"/>
    <property type="match status" value="1"/>
</dbReference>
<dbReference type="SUPFAM" id="SSF47781">
    <property type="entry name" value="RuvA domain 2-like"/>
    <property type="match status" value="1"/>
</dbReference>
<keyword id="KW-0963">Cytoplasm</keyword>
<keyword id="KW-0227">DNA damage</keyword>
<keyword id="KW-0233">DNA recombination</keyword>
<keyword id="KW-0234">DNA repair</keyword>
<keyword id="KW-0238">DNA-binding</keyword>
<reference key="1">
    <citation type="journal article" date="2001" name="Nature">
        <title>Complete genome sequence of a multiple drug resistant Salmonella enterica serovar Typhi CT18.</title>
        <authorList>
            <person name="Parkhill J."/>
            <person name="Dougan G."/>
            <person name="James K.D."/>
            <person name="Thomson N.R."/>
            <person name="Pickard D."/>
            <person name="Wain J."/>
            <person name="Churcher C.M."/>
            <person name="Mungall K.L."/>
            <person name="Bentley S.D."/>
            <person name="Holden M.T.G."/>
            <person name="Sebaihia M."/>
            <person name="Baker S."/>
            <person name="Basham D."/>
            <person name="Brooks K."/>
            <person name="Chillingworth T."/>
            <person name="Connerton P."/>
            <person name="Cronin A."/>
            <person name="Davis P."/>
            <person name="Davies R.M."/>
            <person name="Dowd L."/>
            <person name="White N."/>
            <person name="Farrar J."/>
            <person name="Feltwell T."/>
            <person name="Hamlin N."/>
            <person name="Haque A."/>
            <person name="Hien T.T."/>
            <person name="Holroyd S."/>
            <person name="Jagels K."/>
            <person name="Krogh A."/>
            <person name="Larsen T.S."/>
            <person name="Leather S."/>
            <person name="Moule S."/>
            <person name="O'Gaora P."/>
            <person name="Parry C."/>
            <person name="Quail M.A."/>
            <person name="Rutherford K.M."/>
            <person name="Simmonds M."/>
            <person name="Skelton J."/>
            <person name="Stevens K."/>
            <person name="Whitehead S."/>
            <person name="Barrell B.G."/>
        </authorList>
    </citation>
    <scope>NUCLEOTIDE SEQUENCE [LARGE SCALE GENOMIC DNA]</scope>
    <source>
        <strain>CT18</strain>
    </source>
</reference>
<reference key="2">
    <citation type="journal article" date="2003" name="J. Bacteriol.">
        <title>Comparative genomics of Salmonella enterica serovar Typhi strains Ty2 and CT18.</title>
        <authorList>
            <person name="Deng W."/>
            <person name="Liou S.-R."/>
            <person name="Plunkett G. III"/>
            <person name="Mayhew G.F."/>
            <person name="Rose D.J."/>
            <person name="Burland V."/>
            <person name="Kodoyianni V."/>
            <person name="Schwartz D.C."/>
            <person name="Blattner F.R."/>
        </authorList>
    </citation>
    <scope>NUCLEOTIDE SEQUENCE [LARGE SCALE GENOMIC DNA]</scope>
    <source>
        <strain>ATCC 700931 / Ty2</strain>
    </source>
</reference>
<feature type="chain" id="PRO_0000094675" description="Holliday junction branch migration complex subunit RuvA">
    <location>
        <begin position="1"/>
        <end position="203"/>
    </location>
</feature>
<feature type="region of interest" description="Domain I" evidence="1">
    <location>
        <begin position="1"/>
        <end position="64"/>
    </location>
</feature>
<feature type="region of interest" description="Domain II" evidence="1">
    <location>
        <begin position="65"/>
        <end position="142"/>
    </location>
</feature>
<feature type="region of interest" description="Flexible linker" evidence="1">
    <location>
        <begin position="143"/>
        <end position="154"/>
    </location>
</feature>
<feature type="region of interest" description="Domain III" evidence="1">
    <location>
        <begin position="155"/>
        <end position="203"/>
    </location>
</feature>
<gene>
    <name evidence="1" type="primary">ruvA</name>
    <name type="ordered locus">STY2103</name>
    <name type="ordered locus">t0982</name>
</gene>
<proteinExistence type="inferred from homology"/>
<organism>
    <name type="scientific">Salmonella typhi</name>
    <dbReference type="NCBI Taxonomy" id="90370"/>
    <lineage>
        <taxon>Bacteria</taxon>
        <taxon>Pseudomonadati</taxon>
        <taxon>Pseudomonadota</taxon>
        <taxon>Gammaproteobacteria</taxon>
        <taxon>Enterobacterales</taxon>
        <taxon>Enterobacteriaceae</taxon>
        <taxon>Salmonella</taxon>
    </lineage>
</organism>
<evidence type="ECO:0000255" key="1">
    <source>
        <dbReference type="HAMAP-Rule" id="MF_00031"/>
    </source>
</evidence>
<accession>P66747</accession>
<accession>Q8XFH9</accession>
<name>RUVA_SALTI</name>